<dbReference type="EC" id="2.7.7.6" evidence="1"/>
<dbReference type="EMBL" id="AP009049">
    <property type="protein sequence ID" value="BAH05226.1"/>
    <property type="molecule type" value="Genomic_DNA"/>
</dbReference>
<dbReference type="RefSeq" id="WP_011988796.1">
    <property type="nucleotide sequence ID" value="NC_011837.1"/>
</dbReference>
<dbReference type="SMR" id="B9DYA1"/>
<dbReference type="KEGG" id="ckr:CKR_0175"/>
<dbReference type="HOGENOM" id="CLU_000524_4_1_9"/>
<dbReference type="Proteomes" id="UP000007969">
    <property type="component" value="Chromosome"/>
</dbReference>
<dbReference type="GO" id="GO:0000428">
    <property type="term" value="C:DNA-directed RNA polymerase complex"/>
    <property type="evidence" value="ECO:0007669"/>
    <property type="project" value="UniProtKB-KW"/>
</dbReference>
<dbReference type="GO" id="GO:0003677">
    <property type="term" value="F:DNA binding"/>
    <property type="evidence" value="ECO:0007669"/>
    <property type="project" value="UniProtKB-UniRule"/>
</dbReference>
<dbReference type="GO" id="GO:0003899">
    <property type="term" value="F:DNA-directed RNA polymerase activity"/>
    <property type="evidence" value="ECO:0007669"/>
    <property type="project" value="UniProtKB-UniRule"/>
</dbReference>
<dbReference type="GO" id="GO:0032549">
    <property type="term" value="F:ribonucleoside binding"/>
    <property type="evidence" value="ECO:0007669"/>
    <property type="project" value="InterPro"/>
</dbReference>
<dbReference type="GO" id="GO:0006351">
    <property type="term" value="P:DNA-templated transcription"/>
    <property type="evidence" value="ECO:0007669"/>
    <property type="project" value="UniProtKB-UniRule"/>
</dbReference>
<dbReference type="CDD" id="cd00653">
    <property type="entry name" value="RNA_pol_B_RPB2"/>
    <property type="match status" value="1"/>
</dbReference>
<dbReference type="FunFam" id="3.90.1800.10:FF:000001">
    <property type="entry name" value="DNA-directed RNA polymerase subunit beta"/>
    <property type="match status" value="1"/>
</dbReference>
<dbReference type="Gene3D" id="2.40.50.100">
    <property type="match status" value="1"/>
</dbReference>
<dbReference type="Gene3D" id="2.40.50.150">
    <property type="match status" value="1"/>
</dbReference>
<dbReference type="Gene3D" id="3.90.1100.10">
    <property type="match status" value="2"/>
</dbReference>
<dbReference type="Gene3D" id="2.40.270.10">
    <property type="entry name" value="DNA-directed RNA polymerase, subunit 2, domain 6"/>
    <property type="match status" value="1"/>
</dbReference>
<dbReference type="Gene3D" id="3.90.1800.10">
    <property type="entry name" value="RNA polymerase alpha subunit dimerisation domain"/>
    <property type="match status" value="1"/>
</dbReference>
<dbReference type="Gene3D" id="3.90.1110.10">
    <property type="entry name" value="RNA polymerase Rpb2, domain 2"/>
    <property type="match status" value="1"/>
</dbReference>
<dbReference type="HAMAP" id="MF_01321">
    <property type="entry name" value="RNApol_bact_RpoB"/>
    <property type="match status" value="1"/>
</dbReference>
<dbReference type="InterPro" id="IPR019462">
    <property type="entry name" value="DNA-dir_RNA_pol_bsu_external_1"/>
</dbReference>
<dbReference type="InterPro" id="IPR015712">
    <property type="entry name" value="DNA-dir_RNA_pol_su2"/>
</dbReference>
<dbReference type="InterPro" id="IPR007120">
    <property type="entry name" value="DNA-dir_RNAP_su2_dom"/>
</dbReference>
<dbReference type="InterPro" id="IPR037033">
    <property type="entry name" value="DNA-dir_RNAP_su2_hyb_sf"/>
</dbReference>
<dbReference type="InterPro" id="IPR010243">
    <property type="entry name" value="RNA_pol_bsu_bac"/>
</dbReference>
<dbReference type="InterPro" id="IPR007121">
    <property type="entry name" value="RNA_pol_bsu_CS"/>
</dbReference>
<dbReference type="InterPro" id="IPR007644">
    <property type="entry name" value="RNA_pol_bsu_protrusion"/>
</dbReference>
<dbReference type="InterPro" id="IPR007642">
    <property type="entry name" value="RNA_pol_Rpb2_2"/>
</dbReference>
<dbReference type="InterPro" id="IPR037034">
    <property type="entry name" value="RNA_pol_Rpb2_2_sf"/>
</dbReference>
<dbReference type="InterPro" id="IPR007645">
    <property type="entry name" value="RNA_pol_Rpb2_3"/>
</dbReference>
<dbReference type="InterPro" id="IPR007641">
    <property type="entry name" value="RNA_pol_Rpb2_7"/>
</dbReference>
<dbReference type="InterPro" id="IPR014724">
    <property type="entry name" value="RNA_pol_RPB2_OB-fold"/>
</dbReference>
<dbReference type="NCBIfam" id="NF001616">
    <property type="entry name" value="PRK00405.1"/>
    <property type="match status" value="1"/>
</dbReference>
<dbReference type="NCBIfam" id="TIGR02013">
    <property type="entry name" value="rpoB"/>
    <property type="match status" value="1"/>
</dbReference>
<dbReference type="PANTHER" id="PTHR20856">
    <property type="entry name" value="DNA-DIRECTED RNA POLYMERASE I SUBUNIT 2"/>
    <property type="match status" value="1"/>
</dbReference>
<dbReference type="Pfam" id="PF04563">
    <property type="entry name" value="RNA_pol_Rpb2_1"/>
    <property type="match status" value="1"/>
</dbReference>
<dbReference type="Pfam" id="PF04561">
    <property type="entry name" value="RNA_pol_Rpb2_2"/>
    <property type="match status" value="2"/>
</dbReference>
<dbReference type="Pfam" id="PF04565">
    <property type="entry name" value="RNA_pol_Rpb2_3"/>
    <property type="match status" value="1"/>
</dbReference>
<dbReference type="Pfam" id="PF10385">
    <property type="entry name" value="RNA_pol_Rpb2_45"/>
    <property type="match status" value="1"/>
</dbReference>
<dbReference type="Pfam" id="PF00562">
    <property type="entry name" value="RNA_pol_Rpb2_6"/>
    <property type="match status" value="1"/>
</dbReference>
<dbReference type="Pfam" id="PF04560">
    <property type="entry name" value="RNA_pol_Rpb2_7"/>
    <property type="match status" value="1"/>
</dbReference>
<dbReference type="SUPFAM" id="SSF64484">
    <property type="entry name" value="beta and beta-prime subunits of DNA dependent RNA-polymerase"/>
    <property type="match status" value="1"/>
</dbReference>
<dbReference type="PROSITE" id="PS01166">
    <property type="entry name" value="RNA_POL_BETA"/>
    <property type="match status" value="1"/>
</dbReference>
<gene>
    <name evidence="1" type="primary">rpoB</name>
    <name type="ordered locus">CKR_0175</name>
</gene>
<comment type="function">
    <text evidence="1">DNA-dependent RNA polymerase catalyzes the transcription of DNA into RNA using the four ribonucleoside triphosphates as substrates.</text>
</comment>
<comment type="catalytic activity">
    <reaction evidence="1">
        <text>RNA(n) + a ribonucleoside 5'-triphosphate = RNA(n+1) + diphosphate</text>
        <dbReference type="Rhea" id="RHEA:21248"/>
        <dbReference type="Rhea" id="RHEA-COMP:14527"/>
        <dbReference type="Rhea" id="RHEA-COMP:17342"/>
        <dbReference type="ChEBI" id="CHEBI:33019"/>
        <dbReference type="ChEBI" id="CHEBI:61557"/>
        <dbReference type="ChEBI" id="CHEBI:140395"/>
        <dbReference type="EC" id="2.7.7.6"/>
    </reaction>
</comment>
<comment type="subunit">
    <text evidence="1">The RNAP catalytic core consists of 2 alpha, 1 beta, 1 beta' and 1 omega subunit. When a sigma factor is associated with the core the holoenzyme is formed, which can initiate transcription.</text>
</comment>
<comment type="similarity">
    <text evidence="1">Belongs to the RNA polymerase beta chain family.</text>
</comment>
<keyword id="KW-0240">DNA-directed RNA polymerase</keyword>
<keyword id="KW-0548">Nucleotidyltransferase</keyword>
<keyword id="KW-0804">Transcription</keyword>
<keyword id="KW-0808">Transferase</keyword>
<sequence>MVHPVRVGKRTRMSFSRLKEIGHMPNLIEVQLDSYNWFLKEGLQEVFEDINPIQDYTANLNLEFVGYKLDMDNIKYSVEECKERDSTYAAPLKVKVRLLNKETGEVKEQEVFMGDFPLMTEQGTFIINGAERVIVSQLVRSPGVYYDVSVDKTGKNLFSSTVIPNRGAWLEYETDSNNIIYVRIDKTRKLPITILVRAMGHGTDTEITNFFGEDERLKATIEKDNTKTHEEALLEIYKRLRPGEPPTVDSARSLIESLFFDPKRYDLSRVGRYKFNKKLSLHLRIVNQISTGDVVNPETGEILVQKGEKIDREKAVQIQQCGINSVDIEIEDTTLRVIGNNFVNINNFIDFNIDDLNIKESVYYPALKQILDNYSSEESIREQIKKNIHNLIPKHIIRDDIYATVSYELGLAYGVGHTDDIDHLGNRRLRSVGELLQNQFRIGLSRMERVVKERMTIQDQEVITPQALINIRPVAASIKEFFGSSQLSQFMDQTNPLSELTHKRRLSALGPGGLSRERAGFEVRDVHHSHYGRMCPIETPEGPNIGLINSLATYAKVNEYGFIETPYRKVNKKEKIVTNEIVYMTADEEDEYLIGRANEPIDENGKFVDSKITVRDKEDVIVVPAEDVDYMDLSPRQLVSVATAMIPFLENDDASRALMGSNMQRQAVPLLKPQAPVVGTGIEYKAAVDSGVLPKARNAGVVSYVCANEIRVRRDSDGGTDIYRLLKFQRSNQGTCINQRPIVEKGEIVQQGTVLADGPSTDLGEIALGKNIRMGFTTWEGYNYEDAMLISEELVKKDVFTSIHIEEYESEARDTKLGPEEITRDIPNVGEDALKDIDDRGIIKIGAEVRAGDILVGKVTPKGETELTAEERLLRAIFGEKAREVRDTSLRVPHGEAGIIVDVKVFTRKNGDELSPGVNKLVRCYIAQKRKISVGDKMAGRHGNKGVISRVLPEEDMPFLPDGRPLEICLNPLGVPSRMNIGQVLEVHLGWAASELGWHIATPVFDGATEEDIIECLKKAGYREDGKTILYDGRTGEPFNRPVTVGYMYILKLAHLVDDKIHARSTGPYSLVTQQPLGGKAQFGGQRFGEMEVWALEAYGAAHTLQEILTVKSDDVVGRVKTYEAIVKGENIPEPGVPESFKVLIKELQALCLDVKVLNDDNQEIKLKESVDEEIENLDVNIEGNEDFVLSSQDNDYEEPEENDEEDELNLDYDDLTLDDLKDDLKIEDFNDEH</sequence>
<name>RPOB_CLOK1</name>
<organism>
    <name type="scientific">Clostridium kluyveri (strain NBRC 12016)</name>
    <dbReference type="NCBI Taxonomy" id="583346"/>
    <lineage>
        <taxon>Bacteria</taxon>
        <taxon>Bacillati</taxon>
        <taxon>Bacillota</taxon>
        <taxon>Clostridia</taxon>
        <taxon>Eubacteriales</taxon>
        <taxon>Clostridiaceae</taxon>
        <taxon>Clostridium</taxon>
    </lineage>
</organism>
<proteinExistence type="inferred from homology"/>
<feature type="chain" id="PRO_1000165801" description="DNA-directed RNA polymerase subunit beta">
    <location>
        <begin position="1"/>
        <end position="1234"/>
    </location>
</feature>
<feature type="region of interest" description="Disordered" evidence="2">
    <location>
        <begin position="1189"/>
        <end position="1212"/>
    </location>
</feature>
<feature type="compositionally biased region" description="Acidic residues" evidence="2">
    <location>
        <begin position="1195"/>
        <end position="1212"/>
    </location>
</feature>
<protein>
    <recommendedName>
        <fullName evidence="1">DNA-directed RNA polymerase subunit beta</fullName>
        <shortName evidence="1">RNAP subunit beta</shortName>
        <ecNumber evidence="1">2.7.7.6</ecNumber>
    </recommendedName>
    <alternativeName>
        <fullName evidence="1">RNA polymerase subunit beta</fullName>
    </alternativeName>
    <alternativeName>
        <fullName evidence="1">Transcriptase subunit beta</fullName>
    </alternativeName>
</protein>
<reference key="1">
    <citation type="submission" date="2005-09" db="EMBL/GenBank/DDBJ databases">
        <title>Complete genome sequence of Clostridium kluyveri and comparative genomics of Clostridia species.</title>
        <authorList>
            <person name="Inui M."/>
            <person name="Nonaka H."/>
            <person name="Shinoda Y."/>
            <person name="Ikenaga Y."/>
            <person name="Abe M."/>
            <person name="Naito K."/>
            <person name="Vertes A.A."/>
            <person name="Yukawa H."/>
        </authorList>
    </citation>
    <scope>NUCLEOTIDE SEQUENCE [LARGE SCALE GENOMIC DNA]</scope>
    <source>
        <strain>NBRC 12016</strain>
    </source>
</reference>
<evidence type="ECO:0000255" key="1">
    <source>
        <dbReference type="HAMAP-Rule" id="MF_01321"/>
    </source>
</evidence>
<evidence type="ECO:0000256" key="2">
    <source>
        <dbReference type="SAM" id="MobiDB-lite"/>
    </source>
</evidence>
<accession>B9DYA1</accession>